<dbReference type="EC" id="3.1.26.11" evidence="1"/>
<dbReference type="EMBL" id="AP009380">
    <property type="protein sequence ID" value="BAG33289.1"/>
    <property type="molecule type" value="Genomic_DNA"/>
</dbReference>
<dbReference type="RefSeq" id="WP_012457766.1">
    <property type="nucleotide sequence ID" value="NZ_CP025930.1"/>
</dbReference>
<dbReference type="SMR" id="B2RIU4"/>
<dbReference type="GeneID" id="29255989"/>
<dbReference type="KEGG" id="pgn:PGN_0770"/>
<dbReference type="eggNOG" id="COG1234">
    <property type="taxonomic scope" value="Bacteria"/>
</dbReference>
<dbReference type="HOGENOM" id="CLU_031317_2_1_10"/>
<dbReference type="OrthoDB" id="9800940at2"/>
<dbReference type="BioCyc" id="PGIN431947:G1G2V-843-MONOMER"/>
<dbReference type="Proteomes" id="UP000008842">
    <property type="component" value="Chromosome"/>
</dbReference>
<dbReference type="GO" id="GO:0042781">
    <property type="term" value="F:3'-tRNA processing endoribonuclease activity"/>
    <property type="evidence" value="ECO:0007669"/>
    <property type="project" value="UniProtKB-UniRule"/>
</dbReference>
<dbReference type="GO" id="GO:0008270">
    <property type="term" value="F:zinc ion binding"/>
    <property type="evidence" value="ECO:0007669"/>
    <property type="project" value="UniProtKB-UniRule"/>
</dbReference>
<dbReference type="CDD" id="cd07717">
    <property type="entry name" value="RNaseZ_ZiPD-like_MBL-fold"/>
    <property type="match status" value="1"/>
</dbReference>
<dbReference type="Gene3D" id="3.60.15.10">
    <property type="entry name" value="Ribonuclease Z/Hydroxyacylglutathione hydrolase-like"/>
    <property type="match status" value="1"/>
</dbReference>
<dbReference type="HAMAP" id="MF_01818">
    <property type="entry name" value="RNase_Z_BN"/>
    <property type="match status" value="1"/>
</dbReference>
<dbReference type="InterPro" id="IPR001279">
    <property type="entry name" value="Metallo-B-lactamas"/>
</dbReference>
<dbReference type="InterPro" id="IPR036866">
    <property type="entry name" value="RibonucZ/Hydroxyglut_hydro"/>
</dbReference>
<dbReference type="InterPro" id="IPR013471">
    <property type="entry name" value="RNase_Z/BN"/>
</dbReference>
<dbReference type="NCBIfam" id="NF000801">
    <property type="entry name" value="PRK00055.1-3"/>
    <property type="match status" value="1"/>
</dbReference>
<dbReference type="NCBIfam" id="TIGR02651">
    <property type="entry name" value="RNase_Z"/>
    <property type="match status" value="1"/>
</dbReference>
<dbReference type="PANTHER" id="PTHR46018">
    <property type="entry name" value="ZINC PHOSPHODIESTERASE ELAC PROTEIN 1"/>
    <property type="match status" value="1"/>
</dbReference>
<dbReference type="PANTHER" id="PTHR46018:SF2">
    <property type="entry name" value="ZINC PHOSPHODIESTERASE ELAC PROTEIN 1"/>
    <property type="match status" value="1"/>
</dbReference>
<dbReference type="Pfam" id="PF12706">
    <property type="entry name" value="Lactamase_B_2"/>
    <property type="match status" value="2"/>
</dbReference>
<dbReference type="SUPFAM" id="SSF56281">
    <property type="entry name" value="Metallo-hydrolase/oxidoreductase"/>
    <property type="match status" value="1"/>
</dbReference>
<protein>
    <recommendedName>
        <fullName evidence="1">Ribonuclease Z</fullName>
        <shortName evidence="1">RNase Z</shortName>
        <ecNumber evidence="1">3.1.26.11</ecNumber>
    </recommendedName>
    <alternativeName>
        <fullName evidence="1">tRNA 3 endonuclease</fullName>
    </alternativeName>
    <alternativeName>
        <fullName evidence="1">tRNase Z</fullName>
    </alternativeName>
</protein>
<sequence>MAAFSVHILGCGSALPTTHHHPSSQVIDLRDKLYMIDCGEGVQRQFRHEKLHFGRLIHIFISHLHGDHCFGLPGFISTLGLLGRTGTLHVHGPEGIERFLSPILEQFCHRMPYQVEIHTIDASRHALVHEDKSVKVYSIPLSHRIPAVGYLFEEKCRARHLNKAAAEFYNIPLAEYPLIIEGSDYTTPDGRIIPNRHLTTPGTPPRRYAYCSDTEFCPSIVPIIQGVDLLYHEATFMEEDWARAKETFHSTAKEAAEIARQAGAKRLLIGHYSGRYKDVQGLLEEAQSVFKPTIAANERMRIDL</sequence>
<keyword id="KW-0255">Endonuclease</keyword>
<keyword id="KW-0378">Hydrolase</keyword>
<keyword id="KW-0479">Metal-binding</keyword>
<keyword id="KW-0540">Nuclease</keyword>
<keyword id="KW-0819">tRNA processing</keyword>
<keyword id="KW-0862">Zinc</keyword>
<organism>
    <name type="scientific">Porphyromonas gingivalis (strain ATCC 33277 / DSM 20709 / CIP 103683 / JCM 12257 / NCTC 11834 / 2561)</name>
    <dbReference type="NCBI Taxonomy" id="431947"/>
    <lineage>
        <taxon>Bacteria</taxon>
        <taxon>Pseudomonadati</taxon>
        <taxon>Bacteroidota</taxon>
        <taxon>Bacteroidia</taxon>
        <taxon>Bacteroidales</taxon>
        <taxon>Porphyromonadaceae</taxon>
        <taxon>Porphyromonas</taxon>
    </lineage>
</organism>
<reference key="1">
    <citation type="journal article" date="2008" name="DNA Res.">
        <title>Determination of the genome sequence of Porphyromonas gingivalis strain ATCC 33277 and genomic comparison with strain W83 revealed extensive genome rearrangements in P. gingivalis.</title>
        <authorList>
            <person name="Naito M."/>
            <person name="Hirakawa H."/>
            <person name="Yamashita A."/>
            <person name="Ohara N."/>
            <person name="Shoji M."/>
            <person name="Yukitake H."/>
            <person name="Nakayama K."/>
            <person name="Toh H."/>
            <person name="Yoshimura F."/>
            <person name="Kuhara S."/>
            <person name="Hattori M."/>
            <person name="Hayashi T."/>
            <person name="Nakayama K."/>
        </authorList>
    </citation>
    <scope>NUCLEOTIDE SEQUENCE [LARGE SCALE GENOMIC DNA]</scope>
    <source>
        <strain>ATCC 33277 / DSM 20709 / CIP 103683 / JCM 12257 / NCTC 11834 / 2561</strain>
    </source>
</reference>
<accession>B2RIU4</accession>
<evidence type="ECO:0000255" key="1">
    <source>
        <dbReference type="HAMAP-Rule" id="MF_01818"/>
    </source>
</evidence>
<gene>
    <name evidence="1" type="primary">rnz</name>
    <name type="ordered locus">PGN_0770</name>
</gene>
<feature type="chain" id="PRO_1000187976" description="Ribonuclease Z">
    <location>
        <begin position="1"/>
        <end position="304"/>
    </location>
</feature>
<feature type="active site" description="Proton acceptor" evidence="1">
    <location>
        <position position="67"/>
    </location>
</feature>
<feature type="binding site" evidence="1">
    <location>
        <position position="63"/>
    </location>
    <ligand>
        <name>Zn(2+)</name>
        <dbReference type="ChEBI" id="CHEBI:29105"/>
        <label>1</label>
        <note>catalytic</note>
    </ligand>
</feature>
<feature type="binding site" evidence="1">
    <location>
        <position position="65"/>
    </location>
    <ligand>
        <name>Zn(2+)</name>
        <dbReference type="ChEBI" id="CHEBI:29105"/>
        <label>1</label>
        <note>catalytic</note>
    </ligand>
</feature>
<feature type="binding site" evidence="1">
    <location>
        <position position="67"/>
    </location>
    <ligand>
        <name>Zn(2+)</name>
        <dbReference type="ChEBI" id="CHEBI:29105"/>
        <label>2</label>
        <note>catalytic</note>
    </ligand>
</feature>
<feature type="binding site" evidence="1">
    <location>
        <position position="68"/>
    </location>
    <ligand>
        <name>Zn(2+)</name>
        <dbReference type="ChEBI" id="CHEBI:29105"/>
        <label>2</label>
        <note>catalytic</note>
    </ligand>
</feature>
<feature type="binding site" evidence="1">
    <location>
        <position position="143"/>
    </location>
    <ligand>
        <name>Zn(2+)</name>
        <dbReference type="ChEBI" id="CHEBI:29105"/>
        <label>1</label>
        <note>catalytic</note>
    </ligand>
</feature>
<feature type="binding site" evidence="1">
    <location>
        <position position="213"/>
    </location>
    <ligand>
        <name>Zn(2+)</name>
        <dbReference type="ChEBI" id="CHEBI:29105"/>
        <label>1</label>
        <note>catalytic</note>
    </ligand>
</feature>
<feature type="binding site" evidence="1">
    <location>
        <position position="213"/>
    </location>
    <ligand>
        <name>Zn(2+)</name>
        <dbReference type="ChEBI" id="CHEBI:29105"/>
        <label>2</label>
        <note>catalytic</note>
    </ligand>
</feature>
<feature type="binding site" evidence="1">
    <location>
        <position position="271"/>
    </location>
    <ligand>
        <name>Zn(2+)</name>
        <dbReference type="ChEBI" id="CHEBI:29105"/>
        <label>2</label>
        <note>catalytic</note>
    </ligand>
</feature>
<comment type="function">
    <text evidence="1">Zinc phosphodiesterase, which displays some tRNA 3'-processing endonuclease activity. Probably involved in tRNA maturation, by removing a 3'-trailer from precursor tRNA.</text>
</comment>
<comment type="catalytic activity">
    <reaction evidence="1">
        <text>Endonucleolytic cleavage of RNA, removing extra 3' nucleotides from tRNA precursor, generating 3' termini of tRNAs. A 3'-hydroxy group is left at the tRNA terminus and a 5'-phosphoryl group is left at the trailer molecule.</text>
        <dbReference type="EC" id="3.1.26.11"/>
    </reaction>
</comment>
<comment type="cofactor">
    <cofactor evidence="1">
        <name>Zn(2+)</name>
        <dbReference type="ChEBI" id="CHEBI:29105"/>
    </cofactor>
    <text evidence="1">Binds 2 Zn(2+) ions.</text>
</comment>
<comment type="subunit">
    <text evidence="1">Homodimer.</text>
</comment>
<comment type="similarity">
    <text evidence="1">Belongs to the RNase Z family.</text>
</comment>
<proteinExistence type="inferred from homology"/>
<name>RNZ_PORG3</name>